<accession>Q6FZ17</accession>
<evidence type="ECO:0000255" key="1">
    <source>
        <dbReference type="HAMAP-Rule" id="MF_00227"/>
    </source>
</evidence>
<comment type="function">
    <text evidence="1">RNaseP catalyzes the removal of the 5'-leader sequence from pre-tRNA to produce the mature 5'-terminus. It can also cleave other RNA substrates such as 4.5S RNA. The protein component plays an auxiliary but essential role in vivo by binding to the 5'-leader sequence and broadening the substrate specificity of the ribozyme.</text>
</comment>
<comment type="catalytic activity">
    <reaction evidence="1">
        <text>Endonucleolytic cleavage of RNA, removing 5'-extranucleotides from tRNA precursor.</text>
        <dbReference type="EC" id="3.1.26.5"/>
    </reaction>
</comment>
<comment type="subunit">
    <text evidence="1">Consists of a catalytic RNA component (M1 or rnpB) and a protein subunit.</text>
</comment>
<comment type="similarity">
    <text evidence="1">Belongs to the RnpA family.</text>
</comment>
<feature type="chain" id="PRO_0000198426" description="Ribonuclease P protein component">
    <location>
        <begin position="1"/>
        <end position="133"/>
    </location>
</feature>
<name>RNPA_BARQU</name>
<keyword id="KW-0255">Endonuclease</keyword>
<keyword id="KW-0378">Hydrolase</keyword>
<keyword id="KW-0540">Nuclease</keyword>
<keyword id="KW-0694">RNA-binding</keyword>
<keyword id="KW-0819">tRNA processing</keyword>
<dbReference type="EC" id="3.1.26.5" evidence="1"/>
<dbReference type="EMBL" id="BX897700">
    <property type="protein sequence ID" value="CAF26453.1"/>
    <property type="molecule type" value="Genomic_DNA"/>
</dbReference>
<dbReference type="SMR" id="Q6FZ17"/>
<dbReference type="KEGG" id="bqu:BQ09770"/>
<dbReference type="eggNOG" id="COG0594">
    <property type="taxonomic scope" value="Bacteria"/>
</dbReference>
<dbReference type="HOGENOM" id="CLU_117179_6_1_5"/>
<dbReference type="Proteomes" id="UP000000597">
    <property type="component" value="Chromosome"/>
</dbReference>
<dbReference type="GO" id="GO:0030677">
    <property type="term" value="C:ribonuclease P complex"/>
    <property type="evidence" value="ECO:0007669"/>
    <property type="project" value="TreeGrafter"/>
</dbReference>
<dbReference type="GO" id="GO:0042781">
    <property type="term" value="F:3'-tRNA processing endoribonuclease activity"/>
    <property type="evidence" value="ECO:0007669"/>
    <property type="project" value="TreeGrafter"/>
</dbReference>
<dbReference type="GO" id="GO:0004526">
    <property type="term" value="F:ribonuclease P activity"/>
    <property type="evidence" value="ECO:0007669"/>
    <property type="project" value="UniProtKB-UniRule"/>
</dbReference>
<dbReference type="GO" id="GO:0000049">
    <property type="term" value="F:tRNA binding"/>
    <property type="evidence" value="ECO:0007669"/>
    <property type="project" value="UniProtKB-UniRule"/>
</dbReference>
<dbReference type="GO" id="GO:0001682">
    <property type="term" value="P:tRNA 5'-leader removal"/>
    <property type="evidence" value="ECO:0007669"/>
    <property type="project" value="UniProtKB-UniRule"/>
</dbReference>
<dbReference type="Gene3D" id="3.30.230.10">
    <property type="match status" value="1"/>
</dbReference>
<dbReference type="HAMAP" id="MF_00227">
    <property type="entry name" value="RNase_P"/>
    <property type="match status" value="1"/>
</dbReference>
<dbReference type="InterPro" id="IPR020568">
    <property type="entry name" value="Ribosomal_Su5_D2-typ_SF"/>
</dbReference>
<dbReference type="InterPro" id="IPR014721">
    <property type="entry name" value="Ribsml_uS5_D2-typ_fold_subgr"/>
</dbReference>
<dbReference type="InterPro" id="IPR000100">
    <property type="entry name" value="RNase_P"/>
</dbReference>
<dbReference type="InterPro" id="IPR020539">
    <property type="entry name" value="RNase_P_CS"/>
</dbReference>
<dbReference type="NCBIfam" id="TIGR00188">
    <property type="entry name" value="rnpA"/>
    <property type="match status" value="1"/>
</dbReference>
<dbReference type="PANTHER" id="PTHR33992">
    <property type="entry name" value="RIBONUCLEASE P PROTEIN COMPONENT"/>
    <property type="match status" value="1"/>
</dbReference>
<dbReference type="PANTHER" id="PTHR33992:SF1">
    <property type="entry name" value="RIBONUCLEASE P PROTEIN COMPONENT"/>
    <property type="match status" value="1"/>
</dbReference>
<dbReference type="Pfam" id="PF00825">
    <property type="entry name" value="Ribonuclease_P"/>
    <property type="match status" value="1"/>
</dbReference>
<dbReference type="SUPFAM" id="SSF54211">
    <property type="entry name" value="Ribosomal protein S5 domain 2-like"/>
    <property type="match status" value="1"/>
</dbReference>
<dbReference type="PROSITE" id="PS00648">
    <property type="entry name" value="RIBONUCLEASE_P"/>
    <property type="match status" value="1"/>
</dbReference>
<sequence length="133" mass="15296">MHFMKRKHPCRIRKRADFLAVRTGEKRRGPLFLLEVKSREQTAGIKSPLVARVGFTVTRKNGNAVKRNRIKRRLREAVRVGLTDDIEAGTDYVIVAHSDALHAPFTFLISELSRRIKPKTKHQKRQQGNMNGI</sequence>
<reference key="1">
    <citation type="journal article" date="2004" name="Proc. Natl. Acad. Sci. U.S.A.">
        <title>The louse-borne human pathogen Bartonella quintana is a genomic derivative of the zoonotic agent Bartonella henselae.</title>
        <authorList>
            <person name="Alsmark U.C.M."/>
            <person name="Frank A.C."/>
            <person name="Karlberg E.O."/>
            <person name="Legault B.-A."/>
            <person name="Ardell D.H."/>
            <person name="Canbaeck B."/>
            <person name="Eriksson A.-S."/>
            <person name="Naeslund A.K."/>
            <person name="Handley S.A."/>
            <person name="Huvet M."/>
            <person name="La Scola B."/>
            <person name="Holmberg M."/>
            <person name="Andersson S.G.E."/>
        </authorList>
    </citation>
    <scope>NUCLEOTIDE SEQUENCE [LARGE SCALE GENOMIC DNA]</scope>
    <source>
        <strain>Toulouse</strain>
    </source>
</reference>
<gene>
    <name evidence="1" type="primary">rnpA</name>
    <name type="ordered locus">BQ09770</name>
</gene>
<organism>
    <name type="scientific">Bartonella quintana (strain Toulouse)</name>
    <name type="common">Rochalimaea quintana</name>
    <dbReference type="NCBI Taxonomy" id="283165"/>
    <lineage>
        <taxon>Bacteria</taxon>
        <taxon>Pseudomonadati</taxon>
        <taxon>Pseudomonadota</taxon>
        <taxon>Alphaproteobacteria</taxon>
        <taxon>Hyphomicrobiales</taxon>
        <taxon>Bartonellaceae</taxon>
        <taxon>Bartonella</taxon>
    </lineage>
</organism>
<protein>
    <recommendedName>
        <fullName evidence="1">Ribonuclease P protein component</fullName>
        <shortName evidence="1">RNase P protein</shortName>
        <shortName evidence="1">RNaseP protein</shortName>
        <ecNumber evidence="1">3.1.26.5</ecNumber>
    </recommendedName>
    <alternativeName>
        <fullName evidence="1">Protein C5</fullName>
    </alternativeName>
</protein>
<proteinExistence type="inferred from homology"/>